<dbReference type="EMBL" id="M21958">
    <property type="protein sequence ID" value="AAB02538.1"/>
    <property type="molecule type" value="Genomic_RNA"/>
</dbReference>
<dbReference type="PIR" id="JA0116">
    <property type="entry name" value="NKVGTD"/>
</dbReference>
<dbReference type="RefSeq" id="NP_062901.1">
    <property type="nucleotide sequence ID" value="NC_001554.1"/>
</dbReference>
<dbReference type="PDB" id="1R9F">
    <property type="method" value="X-ray"/>
    <property type="resolution" value="1.85 A"/>
    <property type="chains" value="A=27-158"/>
</dbReference>
<dbReference type="PDBsum" id="1R9F"/>
<dbReference type="SMR" id="P11690"/>
<dbReference type="KEGG" id="vg:1493957"/>
<dbReference type="EvolutionaryTrace" id="P11690"/>
<dbReference type="Proteomes" id="UP000001666">
    <property type="component" value="Segment"/>
</dbReference>
<dbReference type="GO" id="GO:0044423">
    <property type="term" value="C:virion component"/>
    <property type="evidence" value="ECO:0007669"/>
    <property type="project" value="InterPro"/>
</dbReference>
<dbReference type="GO" id="GO:0003723">
    <property type="term" value="F:RNA binding"/>
    <property type="evidence" value="ECO:0007669"/>
    <property type="project" value="UniProtKB-KW"/>
</dbReference>
<dbReference type="GO" id="GO:0052170">
    <property type="term" value="P:symbiont-mediated suppression of host innate immune response"/>
    <property type="evidence" value="ECO:0007669"/>
    <property type="project" value="UniProtKB-KW"/>
</dbReference>
<dbReference type="Gene3D" id="3.30.390.180">
    <property type="entry name" value="RNA silencing suppressor P19"/>
    <property type="match status" value="1"/>
</dbReference>
<dbReference type="InterPro" id="IPR004905">
    <property type="entry name" value="Tombusvirus_p19"/>
</dbReference>
<dbReference type="InterPro" id="IPR036131">
    <property type="entry name" value="VP19_sf"/>
</dbReference>
<dbReference type="Pfam" id="PF03220">
    <property type="entry name" value="Tombus_P19"/>
    <property type="match status" value="1"/>
</dbReference>
<dbReference type="SUPFAM" id="SSF103145">
    <property type="entry name" value="Tombusvirus P19 core protein, VP19"/>
    <property type="match status" value="1"/>
</dbReference>
<sequence length="172" mass="19395">MERAIQGNDAREQANSERWDGGSGGTTSPFKLPDESPSWTEWRLHNDETNSNQDNPLGFKESWGFGKVVFKRYLRYDRTEASLHRVLGSWTGDSVNYAASRFFGFDQIGCTYSIRFRGVSITVSGGSRTLQHLCEMAIRSKQELLQLAPIEVESNVSRGCPEGTETFEKESE</sequence>
<feature type="chain" id="PRO_0000222881" description="RNA silencing suppressor p19">
    <location>
        <begin position="1"/>
        <end position="172"/>
    </location>
</feature>
<feature type="region of interest" description="Disordered" evidence="2">
    <location>
        <begin position="1"/>
        <end position="38"/>
    </location>
</feature>
<feature type="compositionally biased region" description="Basic and acidic residues" evidence="2">
    <location>
        <begin position="1"/>
        <end position="20"/>
    </location>
</feature>
<feature type="helix" evidence="5">
    <location>
        <begin position="39"/>
        <end position="48"/>
    </location>
</feature>
<feature type="strand" evidence="5">
    <location>
        <begin position="57"/>
        <end position="65"/>
    </location>
</feature>
<feature type="strand" evidence="5">
    <location>
        <begin position="68"/>
        <end position="75"/>
    </location>
</feature>
<feature type="helix" evidence="5">
    <location>
        <begin position="80"/>
        <end position="87"/>
    </location>
</feature>
<feature type="helix" evidence="5">
    <location>
        <begin position="92"/>
        <end position="100"/>
    </location>
</feature>
<feature type="strand" evidence="5">
    <location>
        <begin position="109"/>
        <end position="116"/>
    </location>
</feature>
<feature type="strand" evidence="5">
    <location>
        <begin position="119"/>
        <end position="126"/>
    </location>
</feature>
<feature type="helix" evidence="5">
    <location>
        <begin position="127"/>
        <end position="129"/>
    </location>
</feature>
<feature type="helix" evidence="5">
    <location>
        <begin position="130"/>
        <end position="145"/>
    </location>
</feature>
<accession>P11690</accession>
<evidence type="ECO:0000250" key="1"/>
<evidence type="ECO:0000256" key="2">
    <source>
        <dbReference type="SAM" id="MobiDB-lite"/>
    </source>
</evidence>
<evidence type="ECO:0000269" key="3">
    <source>
    </source>
</evidence>
<evidence type="ECO:0000305" key="4"/>
<evidence type="ECO:0007829" key="5">
    <source>
        <dbReference type="PDB" id="1R9F"/>
    </source>
</evidence>
<reference key="1">
    <citation type="journal article" date="1989" name="Virology">
        <title>Organization of tomato bushy stunt virus genome: characterization of the coat protein gene and the 3' terminus.</title>
        <authorList>
            <person name="Hillman B.I."/>
            <person name="Hearne P.Q."/>
            <person name="Rochon D."/>
            <person name="Morris T.J."/>
        </authorList>
    </citation>
    <scope>NUCLEOTIDE SEQUENCE [GENOMIC RNA]</scope>
</reference>
<reference key="2">
    <citation type="journal article" date="1990" name="Virology">
        <title>The complete genome structure and synthesis of infectious RNA from clones of tomato bushy stunt virus.</title>
        <authorList>
            <person name="Hearne P.Q."/>
            <person name="Knorr D.A."/>
            <person name="Hillman B.I."/>
            <person name="Morris T.J."/>
        </authorList>
    </citation>
    <scope>NUCLEOTIDE SEQUENCE [GENOMIC RNA]</scope>
</reference>
<reference key="3">
    <citation type="journal article" date="1999" name="Proc. Natl. Acad. Sci. U.S.A.">
        <title>Suppression of gene silencing: a general strategy used by diverse DNA and RNA viruses of plants.</title>
        <authorList>
            <person name="Voinnet O."/>
            <person name="Pinto Y.M."/>
            <person name="Baulcombe D.C."/>
        </authorList>
    </citation>
    <scope>FUNCTION</scope>
</reference>
<reference key="4">
    <citation type="journal article" date="2003" name="Nature">
        <title>Recognition of small interfering RNA by a viral suppressor of RNA silencing.</title>
        <authorList>
            <person name="Ye K."/>
            <person name="Malinina L."/>
            <person name="Patel D.J."/>
        </authorList>
    </citation>
    <scope>X-RAY CRYSTALLOGRAPHY (1.85 ANGSTROMS) OF 23-158</scope>
</reference>
<organismHost>
    <name type="scientific">Capsicum annuum</name>
    <name type="common">Capsicum pepper</name>
    <dbReference type="NCBI Taxonomy" id="4072"/>
</organismHost>
<organismHost>
    <name type="scientific">Malus</name>
    <dbReference type="NCBI Taxonomy" id="3749"/>
</organismHost>
<organismHost>
    <name type="scientific">Pyrus</name>
    <name type="common">pears</name>
    <dbReference type="NCBI Taxonomy" id="3766"/>
</organismHost>
<organismHost>
    <name type="scientific">Solanum lycopersicum</name>
    <name type="common">Tomato</name>
    <name type="synonym">Lycopersicon esculentum</name>
    <dbReference type="NCBI Taxonomy" id="4081"/>
</organismHost>
<organismHost>
    <name type="scientific">Solanum melongena</name>
    <name type="common">eggplant</name>
    <dbReference type="NCBI Taxonomy" id="4111"/>
</organismHost>
<organismHost>
    <name type="scientific">Tolmiea menziesii</name>
    <dbReference type="NCBI Taxonomy" id="29777"/>
</organismHost>
<organismHost>
    <name type="scientific">Tulipa</name>
    <dbReference type="NCBI Taxonomy" id="13305"/>
</organismHost>
<proteinExistence type="evidence at protein level"/>
<protein>
    <recommendedName>
        <fullName>RNA silencing suppressor p19</fullName>
    </recommendedName>
    <alternativeName>
        <fullName>19 kDa symptom severity modulator</fullName>
    </alternativeName>
</protein>
<comment type="function">
    <text evidence="1 3">Acts as a suppressor of RNA-mediated gene silencing, also known as post-transcriptional gene silencing (PTGS), a mechanism of plant viral defense that limits the accumulation of viral RNAs. Binds to short interfering RNAs (siRNAs) with high affinity. Acts as a molecular caliper to specifically select siRNAs based on the length of the duplex region of the RNA (By similarity).</text>
</comment>
<comment type="subunit">
    <text>Homodimer.</text>
</comment>
<comment type="similarity">
    <text evidence="4">Belongs to the tombusviruses protein p19 family.</text>
</comment>
<keyword id="KW-0002">3D-structure</keyword>
<keyword id="KW-0945">Host-virus interaction</keyword>
<keyword id="KW-1090">Inhibition of host innate immune response by virus</keyword>
<keyword id="KW-1185">Reference proteome</keyword>
<keyword id="KW-0694">RNA-binding</keyword>
<keyword id="KW-0941">Suppressor of RNA silencing</keyword>
<keyword id="KW-0899">Viral immunoevasion</keyword>
<organism>
    <name type="scientific">Tomato bushy stunt virus (strain Cherry)</name>
    <name type="common">TBSV</name>
    <dbReference type="NCBI Taxonomy" id="12147"/>
    <lineage>
        <taxon>Viruses</taxon>
        <taxon>Riboviria</taxon>
        <taxon>Orthornavirae</taxon>
        <taxon>Kitrinoviricota</taxon>
        <taxon>Tolucaviricetes</taxon>
        <taxon>Tolivirales</taxon>
        <taxon>Tombusviridae</taxon>
        <taxon>Procedovirinae</taxon>
        <taxon>Tombusvirus</taxon>
        <taxon>Tombusvirus lycopersici</taxon>
    </lineage>
</organism>
<name>P19_TBSVC</name>
<gene>
    <name type="ORF">ORF4</name>
</gene>